<organism>
    <name type="scientific">Mus musculus</name>
    <name type="common">Mouse</name>
    <dbReference type="NCBI Taxonomy" id="10090"/>
    <lineage>
        <taxon>Eukaryota</taxon>
        <taxon>Metazoa</taxon>
        <taxon>Chordata</taxon>
        <taxon>Craniata</taxon>
        <taxon>Vertebrata</taxon>
        <taxon>Euteleostomi</taxon>
        <taxon>Mammalia</taxon>
        <taxon>Eutheria</taxon>
        <taxon>Euarchontoglires</taxon>
        <taxon>Glires</taxon>
        <taxon>Rodentia</taxon>
        <taxon>Myomorpha</taxon>
        <taxon>Muroidea</taxon>
        <taxon>Muridae</taxon>
        <taxon>Murinae</taxon>
        <taxon>Mus</taxon>
        <taxon>Mus</taxon>
    </lineage>
</organism>
<feature type="chain" id="PRO_0000119076" description="Actin-binding protein IPP">
    <location>
        <begin position="1"/>
        <end position="584"/>
    </location>
</feature>
<feature type="domain" description="BTB" evidence="1">
    <location>
        <begin position="37"/>
        <end position="104"/>
    </location>
</feature>
<feature type="repeat" description="Kelch 1">
    <location>
        <begin position="296"/>
        <end position="343"/>
    </location>
</feature>
<feature type="repeat" description="Kelch 2">
    <location>
        <begin position="344"/>
        <end position="390"/>
    </location>
</feature>
<feature type="repeat" description="Kelch 3">
    <location>
        <begin position="391"/>
        <end position="437"/>
    </location>
</feature>
<feature type="repeat" description="Kelch 4">
    <location>
        <begin position="439"/>
        <end position="485"/>
    </location>
</feature>
<feature type="repeat" description="Kelch 5">
    <location>
        <begin position="487"/>
        <end position="533"/>
    </location>
</feature>
<feature type="repeat" description="Kelch 6">
    <location>
        <begin position="535"/>
        <end position="583"/>
    </location>
</feature>
<feature type="sequence conflict" description="In Ref. 1; AAK00278." evidence="3" ref="1">
    <original>CP</original>
    <variation>YA</variation>
    <location>
        <begin position="6"/>
        <end position="7"/>
    </location>
</feature>
<feature type="sequence conflict" description="In Ref. 1; AAK00278." evidence="3" ref="1">
    <original>N</original>
    <variation>S</variation>
    <location>
        <position position="12"/>
    </location>
</feature>
<feature type="sequence conflict" description="In Ref. 1; AAK00278." evidence="3" ref="1">
    <original>S</original>
    <variation>T</variation>
    <location>
        <position position="32"/>
    </location>
</feature>
<feature type="sequence conflict" description="In Ref. 1; AAK00278." evidence="3" ref="1">
    <original>S</original>
    <variation>K</variation>
    <location>
        <position position="59"/>
    </location>
</feature>
<feature type="sequence conflict" description="In Ref. 1; AAK00278." evidence="3" ref="1">
    <original>VH</original>
    <variation>SI</variation>
    <location>
        <begin position="164"/>
        <end position="165"/>
    </location>
</feature>
<dbReference type="EMBL" id="AF285178">
    <property type="protein sequence ID" value="AAK00278.1"/>
    <property type="status" value="ALT_FRAME"/>
    <property type="molecule type" value="mRNA"/>
</dbReference>
<dbReference type="EMBL" id="AK131718">
    <property type="protein sequence ID" value="BAE20777.1"/>
    <property type="molecule type" value="mRNA"/>
</dbReference>
<dbReference type="EMBL" id="AL669953">
    <property type="status" value="NOT_ANNOTATED_CDS"/>
    <property type="molecule type" value="Genomic_DNA"/>
</dbReference>
<dbReference type="EMBL" id="X58523">
    <property type="protein sequence ID" value="CAA41413.1"/>
    <property type="status" value="ALT_FRAME"/>
    <property type="molecule type" value="mRNA"/>
</dbReference>
<dbReference type="EMBL" id="X58524">
    <property type="protein sequence ID" value="CAA41414.1"/>
    <property type="status" value="ALT_FRAME"/>
    <property type="molecule type" value="Genomic_DNA"/>
</dbReference>
<dbReference type="CCDS" id="CCDS38851.1"/>
<dbReference type="PIR" id="S16442">
    <property type="entry name" value="S16442"/>
</dbReference>
<dbReference type="RefSeq" id="NP_032415.2">
    <property type="nucleotide sequence ID" value="NM_008389.4"/>
</dbReference>
<dbReference type="SMR" id="P28575"/>
<dbReference type="BioGRID" id="200781">
    <property type="interactions" value="2"/>
</dbReference>
<dbReference type="FunCoup" id="P28575">
    <property type="interactions" value="831"/>
</dbReference>
<dbReference type="STRING" id="10090.ENSMUSP00000102088"/>
<dbReference type="iPTMnet" id="P28575"/>
<dbReference type="PhosphoSitePlus" id="P28575"/>
<dbReference type="PaxDb" id="10090-ENSMUSP00000102088"/>
<dbReference type="ProteomicsDB" id="301661"/>
<dbReference type="Antibodypedia" id="32715">
    <property type="antibodies" value="64 antibodies from 17 providers"/>
</dbReference>
<dbReference type="DNASU" id="16351"/>
<dbReference type="Ensembl" id="ENSMUST00000030461.5">
    <property type="protein sequence ID" value="ENSMUSP00000030461.5"/>
    <property type="gene ID" value="ENSMUSG00000028696.13"/>
</dbReference>
<dbReference type="Ensembl" id="ENSMUST00000106479.8">
    <property type="protein sequence ID" value="ENSMUSP00000102088.2"/>
    <property type="gene ID" value="ENSMUSG00000028696.13"/>
</dbReference>
<dbReference type="GeneID" id="16351"/>
<dbReference type="KEGG" id="mmu:16351"/>
<dbReference type="UCSC" id="uc008ugp.1">
    <property type="organism name" value="mouse"/>
</dbReference>
<dbReference type="AGR" id="MGI:96581"/>
<dbReference type="CTD" id="3652"/>
<dbReference type="MGI" id="MGI:96581">
    <property type="gene designation" value="Ipp"/>
</dbReference>
<dbReference type="VEuPathDB" id="HostDB:ENSMUSG00000028696"/>
<dbReference type="eggNOG" id="KOG4441">
    <property type="taxonomic scope" value="Eukaryota"/>
</dbReference>
<dbReference type="GeneTree" id="ENSGT00940000158629"/>
<dbReference type="HOGENOM" id="CLU_004253_14_1_1"/>
<dbReference type="InParanoid" id="P28575"/>
<dbReference type="OMA" id="CYDPRDN"/>
<dbReference type="OrthoDB" id="1022638at2759"/>
<dbReference type="PhylomeDB" id="P28575"/>
<dbReference type="TreeFam" id="TF329218"/>
<dbReference type="BioGRID-ORCS" id="16351">
    <property type="hits" value="1 hit in 78 CRISPR screens"/>
</dbReference>
<dbReference type="ChiTaRS" id="Ipp">
    <property type="organism name" value="mouse"/>
</dbReference>
<dbReference type="PRO" id="PR:P28575"/>
<dbReference type="Proteomes" id="UP000000589">
    <property type="component" value="Chromosome 4"/>
</dbReference>
<dbReference type="RNAct" id="P28575">
    <property type="molecule type" value="protein"/>
</dbReference>
<dbReference type="Bgee" id="ENSMUSG00000028696">
    <property type="expression patterns" value="Expressed in secondary oocyte and 205 other cell types or tissues"/>
</dbReference>
<dbReference type="GO" id="GO:0005737">
    <property type="term" value="C:cytoplasm"/>
    <property type="evidence" value="ECO:0007669"/>
    <property type="project" value="UniProtKB-KW"/>
</dbReference>
<dbReference type="GO" id="GO:0005856">
    <property type="term" value="C:cytoskeleton"/>
    <property type="evidence" value="ECO:0007669"/>
    <property type="project" value="UniProtKB-SubCell"/>
</dbReference>
<dbReference type="GO" id="GO:0003779">
    <property type="term" value="F:actin binding"/>
    <property type="evidence" value="ECO:0007669"/>
    <property type="project" value="UniProtKB-KW"/>
</dbReference>
<dbReference type="CDD" id="cd18466">
    <property type="entry name" value="BACK_KLHL27_IPP"/>
    <property type="match status" value="1"/>
</dbReference>
<dbReference type="CDD" id="cd18256">
    <property type="entry name" value="BTB_POZ_KLHL27_IPP"/>
    <property type="match status" value="1"/>
</dbReference>
<dbReference type="FunFam" id="2.120.10.80:FF:000080">
    <property type="entry name" value="Actin-binding protein IPP"/>
    <property type="match status" value="1"/>
</dbReference>
<dbReference type="FunFam" id="1.25.40.420:FF:000001">
    <property type="entry name" value="Kelch-like family member 12"/>
    <property type="match status" value="1"/>
</dbReference>
<dbReference type="FunFam" id="3.30.710.10:FF:000001">
    <property type="entry name" value="Kelch-like family member 20"/>
    <property type="match status" value="1"/>
</dbReference>
<dbReference type="Gene3D" id="1.25.40.420">
    <property type="match status" value="1"/>
</dbReference>
<dbReference type="Gene3D" id="2.120.10.80">
    <property type="entry name" value="Kelch-type beta propeller"/>
    <property type="match status" value="2"/>
</dbReference>
<dbReference type="Gene3D" id="3.30.710.10">
    <property type="entry name" value="Potassium Channel Kv1.1, Chain A"/>
    <property type="match status" value="1"/>
</dbReference>
<dbReference type="InterPro" id="IPR011705">
    <property type="entry name" value="BACK"/>
</dbReference>
<dbReference type="InterPro" id="IPR017096">
    <property type="entry name" value="BTB-kelch_protein"/>
</dbReference>
<dbReference type="InterPro" id="IPR000210">
    <property type="entry name" value="BTB/POZ_dom"/>
</dbReference>
<dbReference type="InterPro" id="IPR030104">
    <property type="entry name" value="BTB_POZ_IPP"/>
</dbReference>
<dbReference type="InterPro" id="IPR047067">
    <property type="entry name" value="IPP_BACK"/>
</dbReference>
<dbReference type="InterPro" id="IPR015915">
    <property type="entry name" value="Kelch-typ_b-propeller"/>
</dbReference>
<dbReference type="InterPro" id="IPR006652">
    <property type="entry name" value="Kelch_1"/>
</dbReference>
<dbReference type="InterPro" id="IPR011333">
    <property type="entry name" value="SKP1/BTB/POZ_sf"/>
</dbReference>
<dbReference type="PANTHER" id="PTHR24412">
    <property type="entry name" value="KELCH PROTEIN"/>
    <property type="match status" value="1"/>
</dbReference>
<dbReference type="PANTHER" id="PTHR24412:SF441">
    <property type="entry name" value="KELCH-LIKE PROTEIN 28"/>
    <property type="match status" value="1"/>
</dbReference>
<dbReference type="Pfam" id="PF07707">
    <property type="entry name" value="BACK"/>
    <property type="match status" value="1"/>
</dbReference>
<dbReference type="Pfam" id="PF00651">
    <property type="entry name" value="BTB"/>
    <property type="match status" value="1"/>
</dbReference>
<dbReference type="Pfam" id="PF01344">
    <property type="entry name" value="Kelch_1"/>
    <property type="match status" value="1"/>
</dbReference>
<dbReference type="Pfam" id="PF24681">
    <property type="entry name" value="Kelch_KLHDC2_KLHL20_DRC7"/>
    <property type="match status" value="1"/>
</dbReference>
<dbReference type="PIRSF" id="PIRSF037037">
    <property type="entry name" value="Kelch-like_protein_gigaxonin"/>
    <property type="match status" value="1"/>
</dbReference>
<dbReference type="SMART" id="SM00875">
    <property type="entry name" value="BACK"/>
    <property type="match status" value="1"/>
</dbReference>
<dbReference type="SMART" id="SM00225">
    <property type="entry name" value="BTB"/>
    <property type="match status" value="1"/>
</dbReference>
<dbReference type="SMART" id="SM00612">
    <property type="entry name" value="Kelch"/>
    <property type="match status" value="6"/>
</dbReference>
<dbReference type="SUPFAM" id="SSF117281">
    <property type="entry name" value="Kelch motif"/>
    <property type="match status" value="2"/>
</dbReference>
<dbReference type="SUPFAM" id="SSF54695">
    <property type="entry name" value="POZ domain"/>
    <property type="match status" value="1"/>
</dbReference>
<dbReference type="PROSITE" id="PS50097">
    <property type="entry name" value="BTB"/>
    <property type="match status" value="1"/>
</dbReference>
<name>IPP_MOUSE</name>
<keyword id="KW-0009">Actin-binding</keyword>
<keyword id="KW-0963">Cytoplasm</keyword>
<keyword id="KW-0206">Cytoskeleton</keyword>
<keyword id="KW-0880">Kelch repeat</keyword>
<keyword id="KW-1185">Reference proteome</keyword>
<keyword id="KW-0677">Repeat</keyword>
<gene>
    <name type="primary">Ipp</name>
    <name type="synonym">Mipp</name>
</gene>
<reference key="1">
    <citation type="journal article" date="2001" name="Oncogene">
        <title>Cloning and characterization of ectopically expressed transcripts for the actin-binding protein MIPP in mouse mammary carcinomas.</title>
        <authorList>
            <person name="VanHouten J.N."/>
            <person name="Asch H.L."/>
            <person name="Asch B.B."/>
        </authorList>
    </citation>
    <scope>NUCLEOTIDE SEQUENCE [MRNA]</scope>
    <source>
        <strain>BALB/cJ</strain>
    </source>
</reference>
<reference key="2">
    <citation type="journal article" date="2005" name="Science">
        <title>The transcriptional landscape of the mammalian genome.</title>
        <authorList>
            <person name="Carninci P."/>
            <person name="Kasukawa T."/>
            <person name="Katayama S."/>
            <person name="Gough J."/>
            <person name="Frith M.C."/>
            <person name="Maeda N."/>
            <person name="Oyama R."/>
            <person name="Ravasi T."/>
            <person name="Lenhard B."/>
            <person name="Wells C."/>
            <person name="Kodzius R."/>
            <person name="Shimokawa K."/>
            <person name="Bajic V.B."/>
            <person name="Brenner S.E."/>
            <person name="Batalov S."/>
            <person name="Forrest A.R."/>
            <person name="Zavolan M."/>
            <person name="Davis M.J."/>
            <person name="Wilming L.G."/>
            <person name="Aidinis V."/>
            <person name="Allen J.E."/>
            <person name="Ambesi-Impiombato A."/>
            <person name="Apweiler R."/>
            <person name="Aturaliya R.N."/>
            <person name="Bailey T.L."/>
            <person name="Bansal M."/>
            <person name="Baxter L."/>
            <person name="Beisel K.W."/>
            <person name="Bersano T."/>
            <person name="Bono H."/>
            <person name="Chalk A.M."/>
            <person name="Chiu K.P."/>
            <person name="Choudhary V."/>
            <person name="Christoffels A."/>
            <person name="Clutterbuck D.R."/>
            <person name="Crowe M.L."/>
            <person name="Dalla E."/>
            <person name="Dalrymple B.P."/>
            <person name="de Bono B."/>
            <person name="Della Gatta G."/>
            <person name="di Bernardo D."/>
            <person name="Down T."/>
            <person name="Engstrom P."/>
            <person name="Fagiolini M."/>
            <person name="Faulkner G."/>
            <person name="Fletcher C.F."/>
            <person name="Fukushima T."/>
            <person name="Furuno M."/>
            <person name="Futaki S."/>
            <person name="Gariboldi M."/>
            <person name="Georgii-Hemming P."/>
            <person name="Gingeras T.R."/>
            <person name="Gojobori T."/>
            <person name="Green R.E."/>
            <person name="Gustincich S."/>
            <person name="Harbers M."/>
            <person name="Hayashi Y."/>
            <person name="Hensch T.K."/>
            <person name="Hirokawa N."/>
            <person name="Hill D."/>
            <person name="Huminiecki L."/>
            <person name="Iacono M."/>
            <person name="Ikeo K."/>
            <person name="Iwama A."/>
            <person name="Ishikawa T."/>
            <person name="Jakt M."/>
            <person name="Kanapin A."/>
            <person name="Katoh M."/>
            <person name="Kawasawa Y."/>
            <person name="Kelso J."/>
            <person name="Kitamura H."/>
            <person name="Kitano H."/>
            <person name="Kollias G."/>
            <person name="Krishnan S.P."/>
            <person name="Kruger A."/>
            <person name="Kummerfeld S.K."/>
            <person name="Kurochkin I.V."/>
            <person name="Lareau L.F."/>
            <person name="Lazarevic D."/>
            <person name="Lipovich L."/>
            <person name="Liu J."/>
            <person name="Liuni S."/>
            <person name="McWilliam S."/>
            <person name="Madan Babu M."/>
            <person name="Madera M."/>
            <person name="Marchionni L."/>
            <person name="Matsuda H."/>
            <person name="Matsuzawa S."/>
            <person name="Miki H."/>
            <person name="Mignone F."/>
            <person name="Miyake S."/>
            <person name="Morris K."/>
            <person name="Mottagui-Tabar S."/>
            <person name="Mulder N."/>
            <person name="Nakano N."/>
            <person name="Nakauchi H."/>
            <person name="Ng P."/>
            <person name="Nilsson R."/>
            <person name="Nishiguchi S."/>
            <person name="Nishikawa S."/>
            <person name="Nori F."/>
            <person name="Ohara O."/>
            <person name="Okazaki Y."/>
            <person name="Orlando V."/>
            <person name="Pang K.C."/>
            <person name="Pavan W.J."/>
            <person name="Pavesi G."/>
            <person name="Pesole G."/>
            <person name="Petrovsky N."/>
            <person name="Piazza S."/>
            <person name="Reed J."/>
            <person name="Reid J.F."/>
            <person name="Ring B.Z."/>
            <person name="Ringwald M."/>
            <person name="Rost B."/>
            <person name="Ruan Y."/>
            <person name="Salzberg S.L."/>
            <person name="Sandelin A."/>
            <person name="Schneider C."/>
            <person name="Schoenbach C."/>
            <person name="Sekiguchi K."/>
            <person name="Semple C.A."/>
            <person name="Seno S."/>
            <person name="Sessa L."/>
            <person name="Sheng Y."/>
            <person name="Shibata Y."/>
            <person name="Shimada H."/>
            <person name="Shimada K."/>
            <person name="Silva D."/>
            <person name="Sinclair B."/>
            <person name="Sperling S."/>
            <person name="Stupka E."/>
            <person name="Sugiura K."/>
            <person name="Sultana R."/>
            <person name="Takenaka Y."/>
            <person name="Taki K."/>
            <person name="Tammoja K."/>
            <person name="Tan S.L."/>
            <person name="Tang S."/>
            <person name="Taylor M.S."/>
            <person name="Tegner J."/>
            <person name="Teichmann S.A."/>
            <person name="Ueda H.R."/>
            <person name="van Nimwegen E."/>
            <person name="Verardo R."/>
            <person name="Wei C.L."/>
            <person name="Yagi K."/>
            <person name="Yamanishi H."/>
            <person name="Zabarovsky E."/>
            <person name="Zhu S."/>
            <person name="Zimmer A."/>
            <person name="Hide W."/>
            <person name="Bult C."/>
            <person name="Grimmond S.M."/>
            <person name="Teasdale R.D."/>
            <person name="Liu E.T."/>
            <person name="Brusic V."/>
            <person name="Quackenbush J."/>
            <person name="Wahlestedt C."/>
            <person name="Mattick J.S."/>
            <person name="Hume D.A."/>
            <person name="Kai C."/>
            <person name="Sasaki D."/>
            <person name="Tomaru Y."/>
            <person name="Fukuda S."/>
            <person name="Kanamori-Katayama M."/>
            <person name="Suzuki M."/>
            <person name="Aoki J."/>
            <person name="Arakawa T."/>
            <person name="Iida J."/>
            <person name="Imamura K."/>
            <person name="Itoh M."/>
            <person name="Kato T."/>
            <person name="Kawaji H."/>
            <person name="Kawagashira N."/>
            <person name="Kawashima T."/>
            <person name="Kojima M."/>
            <person name="Kondo S."/>
            <person name="Konno H."/>
            <person name="Nakano K."/>
            <person name="Ninomiya N."/>
            <person name="Nishio T."/>
            <person name="Okada M."/>
            <person name="Plessy C."/>
            <person name="Shibata K."/>
            <person name="Shiraki T."/>
            <person name="Suzuki S."/>
            <person name="Tagami M."/>
            <person name="Waki K."/>
            <person name="Watahiki A."/>
            <person name="Okamura-Oho Y."/>
            <person name="Suzuki H."/>
            <person name="Kawai J."/>
            <person name="Hayashizaki Y."/>
        </authorList>
    </citation>
    <scope>NUCLEOTIDE SEQUENCE [LARGE SCALE MRNA]</scope>
    <source>
        <strain>C57BL/6J</strain>
        <tissue>Testis</tissue>
    </source>
</reference>
<reference key="3">
    <citation type="journal article" date="2009" name="PLoS Biol.">
        <title>Lineage-specific biology revealed by a finished genome assembly of the mouse.</title>
        <authorList>
            <person name="Church D.M."/>
            <person name="Goodstadt L."/>
            <person name="Hillier L.W."/>
            <person name="Zody M.C."/>
            <person name="Goldstein S."/>
            <person name="She X."/>
            <person name="Bult C.J."/>
            <person name="Agarwala R."/>
            <person name="Cherry J.L."/>
            <person name="DiCuccio M."/>
            <person name="Hlavina W."/>
            <person name="Kapustin Y."/>
            <person name="Meric P."/>
            <person name="Maglott D."/>
            <person name="Birtle Z."/>
            <person name="Marques A.C."/>
            <person name="Graves T."/>
            <person name="Zhou S."/>
            <person name="Teague B."/>
            <person name="Potamousis K."/>
            <person name="Churas C."/>
            <person name="Place M."/>
            <person name="Herschleb J."/>
            <person name="Runnheim R."/>
            <person name="Forrest D."/>
            <person name="Amos-Landgraf J."/>
            <person name="Schwartz D.C."/>
            <person name="Cheng Z."/>
            <person name="Lindblad-Toh K."/>
            <person name="Eichler E.E."/>
            <person name="Ponting C.P."/>
        </authorList>
    </citation>
    <scope>NUCLEOTIDE SEQUENCE [LARGE SCALE GENOMIC DNA]</scope>
    <source>
        <strain>C57BL/6J</strain>
    </source>
</reference>
<reference key="4">
    <citation type="journal article" date="1991" name="Nucleic Acids Res.">
        <title>Identification of a novel murine IAP-promoted placenta-expressed gene.</title>
        <authorList>
            <person name="Chang-Yeh A."/>
            <person name="Mold D.E."/>
            <person name="Huang R.C.C."/>
        </authorList>
    </citation>
    <scope>NUCLEOTIDE SEQUENCE [GENOMIC DNA / MRNA] OF 355-556</scope>
</reference>
<reference key="5">
    <citation type="journal article" date="1991" name="Biochem. Biophys. Res. Commun.">
        <title>Cell lineage-specific expression of the MIPP gene.</title>
        <authorList>
            <person name="Mold D.E."/>
            <person name="Chang-Yeh A."/>
            <person name="Huang R.C."/>
        </authorList>
    </citation>
    <scope>TISSUE SPECIFICITY</scope>
</reference>
<protein>
    <recommendedName>
        <fullName>Actin-binding protein IPP</fullName>
    </recommendedName>
    <alternativeName>
        <fullName>Intracisternal A particle-promoted polypeptide</fullName>
        <shortName>IPP</shortName>
    </alternativeName>
    <alternativeName>
        <fullName>Murine IAP-promoted placenta-expressed protein</fullName>
    </alternativeName>
    <alternativeName>
        <fullName>Protein MIPP</fullName>
    </alternativeName>
</protein>
<sequence>MSKEECPKAADNSFSSDKHAQLILAQMNKMRSGQHFCDVQLQVGKETFQVHRLVLAASSPYFAALFTGGMKESSKDVVQILGVEAGIFQLLLDFIYTGVVNIAVTNVQELIVAADMLQLTEVVNLCCDFLKGQIDPQNCIGLFQFSEQIACHDLLEFTENYIHVHFLEVHTGEEFLGLTKDQLIKILRSEELSIEDEYQVFLAAMQWILKDLGKRRKHVVEVLDPVRFPLLPSQRLLKYIEGVSDFNLRVALQTLLKEYCEVCKSPKENKFCSFLQTSKVRPRKKARKYLYAVGGYTRLQGGRWSDSRALSCVERFDTFSQYWTTVSSLHQARCGLGVAVVGGMVYAIGGEKDSMIFDCTECYDPVTKQWTTVASMNHPRCGLGVCVCYGAIYALGGWVGAEIGNTIERFDPDENKWEVVGSMAVSRYYFGCCEMQGLIYAVGGISNEGLELRSFEVYDPLSKRWSPLPPMGTRRAYLGVAALNDCIYAIGGWNETQDALHTVEKYSFEEEKWVEVASMKVPRAGMCAVTVNGLLYVSGGRSSSHDFLAPGTLDSVEVYNPHSDTWTEIGNMITSRCEGGVAVL</sequence>
<evidence type="ECO:0000255" key="1">
    <source>
        <dbReference type="PROSITE-ProRule" id="PRU00037"/>
    </source>
</evidence>
<evidence type="ECO:0000269" key="2">
    <source>
    </source>
</evidence>
<evidence type="ECO:0000305" key="3"/>
<proteinExistence type="evidence at transcript level"/>
<accession>P28575</accession>
<accession>Q3V2M0</accession>
<comment type="function">
    <text>May play a role in organizing the actin cytoskeleton.</text>
</comment>
<comment type="subcellular location">
    <subcellularLocation>
        <location>Cytoplasm</location>
        <location>Cytoskeleton</location>
    </subcellularLocation>
</comment>
<comment type="tissue specificity">
    <text evidence="2">Expression seems confined to tissues derived from trophectoderm and primitive endoderm.</text>
</comment>
<comment type="sequence caution" evidence="3">
    <conflict type="frameshift">
        <sequence resource="EMBL-CDS" id="AAK00278"/>
    </conflict>
</comment>
<comment type="sequence caution" evidence="3">
    <conflict type="frameshift">
        <sequence resource="EMBL-CDS" id="CAA41413"/>
    </conflict>
</comment>
<comment type="sequence caution" evidence="3">
    <conflict type="frameshift">
        <sequence resource="EMBL-CDS" id="CAA41414"/>
    </conflict>
</comment>